<name>RL29_METAR</name>
<gene>
    <name evidence="1" type="primary">rpl29</name>
    <name type="ordered locus">UNCMA_06450</name>
    <name type="ORF">RCIX2549</name>
</gene>
<evidence type="ECO:0000255" key="1">
    <source>
        <dbReference type="HAMAP-Rule" id="MF_00374"/>
    </source>
</evidence>
<evidence type="ECO:0000305" key="2"/>
<protein>
    <recommendedName>
        <fullName evidence="1">Large ribosomal subunit protein uL29</fullName>
    </recommendedName>
    <alternativeName>
        <fullName evidence="2">50S ribosomal protein L29</fullName>
    </alternativeName>
</protein>
<proteinExistence type="inferred from homology"/>
<reference key="1">
    <citation type="journal article" date="2006" name="Science">
        <title>Genome of rice cluster I archaea -- the key methane producers in the rice rhizosphere.</title>
        <authorList>
            <person name="Erkel C."/>
            <person name="Kube M."/>
            <person name="Reinhardt R."/>
            <person name="Liesack W."/>
        </authorList>
    </citation>
    <scope>NUCLEOTIDE SEQUENCE [LARGE SCALE GENOMIC DNA]</scope>
    <source>
        <strain>DSM 22066 / NBRC 105507 / MRE50</strain>
    </source>
</reference>
<feature type="chain" id="PRO_1000007649" description="Large ribosomal subunit protein uL29">
    <location>
        <begin position="1"/>
        <end position="71"/>
    </location>
</feature>
<organism>
    <name type="scientific">Methanocella arvoryzae (strain DSM 22066 / NBRC 105507 / MRE50)</name>
    <dbReference type="NCBI Taxonomy" id="351160"/>
    <lineage>
        <taxon>Archaea</taxon>
        <taxon>Methanobacteriati</taxon>
        <taxon>Methanobacteriota</taxon>
        <taxon>Stenosarchaea group</taxon>
        <taxon>Methanomicrobia</taxon>
        <taxon>Methanocellales</taxon>
        <taxon>Methanocellaceae</taxon>
        <taxon>Methanocella</taxon>
    </lineage>
</organism>
<comment type="similarity">
    <text evidence="1">Belongs to the universal ribosomal protein uL29 family.</text>
</comment>
<dbReference type="EMBL" id="AM114193">
    <property type="protein sequence ID" value="CAJ37611.1"/>
    <property type="molecule type" value="Genomic_DNA"/>
</dbReference>
<dbReference type="RefSeq" id="WP_012034974.1">
    <property type="nucleotide sequence ID" value="NC_009464.1"/>
</dbReference>
<dbReference type="SMR" id="Q0W1Y2"/>
<dbReference type="STRING" id="351160.RCIX2549"/>
<dbReference type="GeneID" id="5142924"/>
<dbReference type="KEGG" id="rci:RCIX2549"/>
<dbReference type="PATRIC" id="fig|351160.9.peg.672"/>
<dbReference type="eggNOG" id="arCOG00785">
    <property type="taxonomic scope" value="Archaea"/>
</dbReference>
<dbReference type="OrthoDB" id="11736at2157"/>
<dbReference type="Proteomes" id="UP000000663">
    <property type="component" value="Chromosome"/>
</dbReference>
<dbReference type="GO" id="GO:0022625">
    <property type="term" value="C:cytosolic large ribosomal subunit"/>
    <property type="evidence" value="ECO:0007669"/>
    <property type="project" value="TreeGrafter"/>
</dbReference>
<dbReference type="GO" id="GO:0003735">
    <property type="term" value="F:structural constituent of ribosome"/>
    <property type="evidence" value="ECO:0007669"/>
    <property type="project" value="InterPro"/>
</dbReference>
<dbReference type="GO" id="GO:0006412">
    <property type="term" value="P:translation"/>
    <property type="evidence" value="ECO:0007669"/>
    <property type="project" value="UniProtKB-UniRule"/>
</dbReference>
<dbReference type="CDD" id="cd00427">
    <property type="entry name" value="Ribosomal_L29_HIP"/>
    <property type="match status" value="1"/>
</dbReference>
<dbReference type="FunFam" id="1.10.287.310:FF:000001">
    <property type="entry name" value="50S ribosomal protein L29"/>
    <property type="match status" value="1"/>
</dbReference>
<dbReference type="Gene3D" id="1.10.287.310">
    <property type="match status" value="1"/>
</dbReference>
<dbReference type="HAMAP" id="MF_00374">
    <property type="entry name" value="Ribosomal_uL29"/>
    <property type="match status" value="1"/>
</dbReference>
<dbReference type="InterPro" id="IPR050063">
    <property type="entry name" value="Ribosomal_protein_uL29"/>
</dbReference>
<dbReference type="InterPro" id="IPR001854">
    <property type="entry name" value="Ribosomal_uL29"/>
</dbReference>
<dbReference type="InterPro" id="IPR018254">
    <property type="entry name" value="Ribosomal_uL29_CS"/>
</dbReference>
<dbReference type="InterPro" id="IPR036049">
    <property type="entry name" value="Ribosomal_uL29_sf"/>
</dbReference>
<dbReference type="NCBIfam" id="TIGR00012">
    <property type="entry name" value="L29"/>
    <property type="match status" value="1"/>
</dbReference>
<dbReference type="PANTHER" id="PTHR10916">
    <property type="entry name" value="60S RIBOSOMAL PROTEIN L35/50S RIBOSOMAL PROTEIN L29"/>
    <property type="match status" value="1"/>
</dbReference>
<dbReference type="PANTHER" id="PTHR10916:SF0">
    <property type="entry name" value="LARGE RIBOSOMAL SUBUNIT PROTEIN UL29C"/>
    <property type="match status" value="1"/>
</dbReference>
<dbReference type="Pfam" id="PF00831">
    <property type="entry name" value="Ribosomal_L29"/>
    <property type="match status" value="1"/>
</dbReference>
<dbReference type="SUPFAM" id="SSF46561">
    <property type="entry name" value="Ribosomal protein L29 (L29p)"/>
    <property type="match status" value="1"/>
</dbReference>
<dbReference type="PROSITE" id="PS00579">
    <property type="entry name" value="RIBOSOMAL_L29"/>
    <property type="match status" value="1"/>
</dbReference>
<sequence>MAILRAKEIRGMSDKELDKQLKDLRNDLLKQHAISATGGAPENPGRIRELRRTIARILTIKQEKKQKEMKR</sequence>
<accession>Q0W1Y2</accession>
<keyword id="KW-1185">Reference proteome</keyword>
<keyword id="KW-0687">Ribonucleoprotein</keyword>
<keyword id="KW-0689">Ribosomal protein</keyword>